<organism>
    <name type="scientific">Cucumber mosaic virus (strain O)</name>
    <name type="common">CMV</name>
    <dbReference type="NCBI Taxonomy" id="12309"/>
    <lineage>
        <taxon>Viruses</taxon>
        <taxon>Riboviria</taxon>
        <taxon>Orthornavirae</taxon>
        <taxon>Kitrinoviricota</taxon>
        <taxon>Alsuviricetes</taxon>
        <taxon>Martellivirales</taxon>
        <taxon>Bromoviridae</taxon>
        <taxon>Cucumovirus</taxon>
        <taxon>Cucumber mosaic virus</taxon>
    </lineage>
</organism>
<gene>
    <name type="ORF">ORF1a</name>
</gene>
<sequence>MATSSFNINELVASHGDKGLLATALVDKAAHEQLEEQLQHQRRGRKVYVRNVLSVKDSEVIRNRYGGKYDLHLTQQEFAPHGLAGALRLCETLDCLDSFPSSGLRQDLVLDFGGSWVTHYLRGHNVHCCSPCLGIRDKMRHTERLMNMRKIILNDPQQFDGRQPDFCTHPAADCKVQAHFAISIHGGYDMGFRGLCEAMNAHGTTILKGTMMFDGAMMFDDQGIIPELNCQWRKIRNAFSETEDVTPLVGKLNSTVFSRVRKFKTLVAFDFINESTMSYVHDWENIKSFLTDQTYSYKGMTYGIERCVINAGIMTYKIIGVPGMCPPELIRHCIWFPSIKDYVGLKIPASQDLVEWKTVRILTSTLRETEEIAMRCYNDKKAWMEQFKVILGVLSAKSSTIVINGMSMQSGERIDINDYHYIGFAILLHTKMKYEQLGKMYDMWNASSISKWFAALTRPVRVFFSSAVHALFPTLRPREEKEFLIKLSTFVTFNEECSFDGGEEWDVISSAAYVATQAVTDGKVLAAQKAEKLAEKLAQPVDEVSDSPEVPSSTPDDTADVCGKEQEVSELDSLSAQTRSPITRVAERATAMLEYAAYEKQLHDTTVSNLKRIWNMAGGDDKRNSLEGNLKFVFDTYFTVDPMVNIHFSTGRWMRPVPEGIVYSVGYNERGLGPKSDGELFIVNSECVICNSESLSAVTRSLQAPTGTISQVDGVAGCGKTTAIKSIFEPSTDMIVTANKKSAQDVRMALFKSSDSKEACAFVRTADSVLLNECPTVSRVLVDEVVLLHFGQLCAVMSKLKAVRAICFGDSEQIAFSSRDASFDMRFSKIIPDETSDADTTFRSPQDVVPLVRLMATKALPKGTHSKYTKWVSQSKVKRSVTSRSIASVTLVDLDSSRFYITMTQADKASLISRAKEMNLPKTFWNERIKTVHESQGISEDHVTLVRLKSTKCDLFKQFSYCLVALTRHKVTFRYEYCGVLNGDLIAECIARA</sequence>
<organismHost>
    <name type="scientific">Cucumis sativus</name>
    <name type="common">Cucumber</name>
    <dbReference type="NCBI Taxonomy" id="3659"/>
</organismHost>
<organismHost>
    <name type="scientific">Nicotiana tabacum</name>
    <name type="common">Common tobacco</name>
    <dbReference type="NCBI Taxonomy" id="4097"/>
</organismHost>
<organismHost>
    <name type="scientific">Solanum lycopersicum</name>
    <name type="common">Tomato</name>
    <name type="synonym">Lycopersicon esculentum</name>
    <dbReference type="NCBI Taxonomy" id="4081"/>
</organismHost>
<dbReference type="EC" id="3.6.4.-"/>
<dbReference type="EC" id="2.1.1.-"/>
<dbReference type="PIR" id="JQ0379">
    <property type="entry name" value="P1VXCM"/>
</dbReference>
<dbReference type="SMR" id="P20122"/>
<dbReference type="GO" id="GO:0044167">
    <property type="term" value="C:host cell endoplasmic reticulum membrane"/>
    <property type="evidence" value="ECO:0007669"/>
    <property type="project" value="UniProtKB-SubCell"/>
</dbReference>
<dbReference type="GO" id="GO:0016020">
    <property type="term" value="C:membrane"/>
    <property type="evidence" value="ECO:0007669"/>
    <property type="project" value="UniProtKB-KW"/>
</dbReference>
<dbReference type="GO" id="GO:0005524">
    <property type="term" value="F:ATP binding"/>
    <property type="evidence" value="ECO:0007669"/>
    <property type="project" value="UniProtKB-KW"/>
</dbReference>
<dbReference type="GO" id="GO:0004386">
    <property type="term" value="F:helicase activity"/>
    <property type="evidence" value="ECO:0007669"/>
    <property type="project" value="UniProtKB-KW"/>
</dbReference>
<dbReference type="GO" id="GO:0016817">
    <property type="term" value="F:hydrolase activity, acting on acid anhydrides"/>
    <property type="evidence" value="ECO:0007669"/>
    <property type="project" value="InterPro"/>
</dbReference>
<dbReference type="GO" id="GO:0008174">
    <property type="term" value="F:mRNA methyltransferase activity"/>
    <property type="evidence" value="ECO:0007669"/>
    <property type="project" value="InterPro"/>
</dbReference>
<dbReference type="GO" id="GO:0003723">
    <property type="term" value="F:RNA binding"/>
    <property type="evidence" value="ECO:0007669"/>
    <property type="project" value="InterPro"/>
</dbReference>
<dbReference type="GO" id="GO:0032259">
    <property type="term" value="P:methylation"/>
    <property type="evidence" value="ECO:0007669"/>
    <property type="project" value="UniProtKB-KW"/>
</dbReference>
<dbReference type="GO" id="GO:0016556">
    <property type="term" value="P:mRNA modification"/>
    <property type="evidence" value="ECO:0007669"/>
    <property type="project" value="InterPro"/>
</dbReference>
<dbReference type="GO" id="GO:0006396">
    <property type="term" value="P:RNA processing"/>
    <property type="evidence" value="ECO:0007669"/>
    <property type="project" value="InterPro"/>
</dbReference>
<dbReference type="Gene3D" id="3.40.50.300">
    <property type="entry name" value="P-loop containing nucleotide triphosphate hydrolases"/>
    <property type="match status" value="2"/>
</dbReference>
<dbReference type="InterPro" id="IPR027351">
    <property type="entry name" value="(+)RNA_virus_helicase_core_dom"/>
</dbReference>
<dbReference type="InterPro" id="IPR021002">
    <property type="entry name" value="1a_necrotic_phenotyp-det_dom"/>
</dbReference>
<dbReference type="InterPro" id="IPR002588">
    <property type="entry name" value="Alphavirus-like_MT_dom"/>
</dbReference>
<dbReference type="InterPro" id="IPR022184">
    <property type="entry name" value="CMV_1a_C"/>
</dbReference>
<dbReference type="InterPro" id="IPR027417">
    <property type="entry name" value="P-loop_NTPase"/>
</dbReference>
<dbReference type="Pfam" id="PF12467">
    <property type="entry name" value="CMV_1a"/>
    <property type="match status" value="1"/>
</dbReference>
<dbReference type="Pfam" id="PF12503">
    <property type="entry name" value="CMV_1a_C"/>
    <property type="match status" value="1"/>
</dbReference>
<dbReference type="Pfam" id="PF01443">
    <property type="entry name" value="Viral_helicase1"/>
    <property type="match status" value="1"/>
</dbReference>
<dbReference type="Pfam" id="PF01660">
    <property type="entry name" value="Vmethyltransf"/>
    <property type="match status" value="1"/>
</dbReference>
<dbReference type="SUPFAM" id="SSF52540">
    <property type="entry name" value="P-loop containing nucleoside triphosphate hydrolases"/>
    <property type="match status" value="1"/>
</dbReference>
<dbReference type="PROSITE" id="PS51743">
    <property type="entry name" value="ALPHAVIRUS_MT"/>
    <property type="match status" value="1"/>
</dbReference>
<dbReference type="PROSITE" id="PS51657">
    <property type="entry name" value="PSRV_HELICASE"/>
    <property type="match status" value="1"/>
</dbReference>
<name>1A_CMVO</name>
<comment type="function">
    <text evidence="1">Involved in the virus replication. Contains a helicase domain and a methyltransferase domain. The methyltransferase domain is probably involved in viral RNA capping. Involved in the formation of ER membrane spherular invaginations in which RNA replication complexes form (By similarity).</text>
</comment>
<comment type="subunit">
    <text evidence="1">Interacts with RNA-directed RNA polymerase 2a.</text>
</comment>
<comment type="subcellular location">
    <subcellularLocation>
        <location evidence="1">Host endoplasmic reticulum membrane</location>
        <topology evidence="1">Peripheral membrane protein</topology>
    </subcellularLocation>
</comment>
<comment type="similarity">
    <text evidence="5">Belongs to the bromoviridae replication protein 1a family.</text>
</comment>
<protein>
    <recommendedName>
        <fullName>Replication protein 1a</fullName>
    </recommendedName>
    <domain>
        <recommendedName>
            <fullName>ATP-dependent helicase</fullName>
            <ecNumber>3.6.4.-</ecNumber>
        </recommendedName>
    </domain>
    <domain>
        <recommendedName>
            <fullName>Methyltransferase</fullName>
            <ecNumber>2.1.1.-</ecNumber>
        </recommendedName>
    </domain>
</protein>
<keyword id="KW-0067">ATP-binding</keyword>
<keyword id="KW-0347">Helicase</keyword>
<keyword id="KW-1038">Host endoplasmic reticulum</keyword>
<keyword id="KW-1043">Host membrane</keyword>
<keyword id="KW-0378">Hydrolase</keyword>
<keyword id="KW-0472">Membrane</keyword>
<keyword id="KW-0489">Methyltransferase</keyword>
<keyword id="KW-0547">Nucleotide-binding</keyword>
<keyword id="KW-0808">Transferase</keyword>
<feature type="chain" id="PRO_0000083262" description="Replication protein 1a">
    <location>
        <begin position="1"/>
        <end position="993"/>
    </location>
</feature>
<feature type="domain" description="Alphavirus-like MT" evidence="3">
    <location>
        <begin position="72"/>
        <end position="290"/>
    </location>
</feature>
<feature type="domain" description="(+)RNA virus helicase ATP-binding">
    <location>
        <begin position="687"/>
        <end position="838"/>
    </location>
</feature>
<feature type="domain" description="(+)RNA virus helicase C-terminal">
    <location>
        <begin position="839"/>
        <end position="993"/>
    </location>
</feature>
<feature type="region of interest" description="Methyltransferase">
    <location>
        <begin position="50"/>
        <end position="409"/>
    </location>
</feature>
<feature type="region of interest" description="Disordered" evidence="4">
    <location>
        <begin position="537"/>
        <end position="565"/>
    </location>
</feature>
<feature type="region of interest" description="ATP-dependent helicase">
    <location>
        <begin position="712"/>
        <end position="975"/>
    </location>
</feature>
<feature type="binding site" evidence="2">
    <location>
        <begin position="714"/>
        <end position="721"/>
    </location>
    <ligand>
        <name>ATP</name>
        <dbReference type="ChEBI" id="CHEBI:30616"/>
    </ligand>
</feature>
<reference key="1">
    <citation type="journal article" date="1989" name="Gene">
        <title>Cloning and sequencing of RNA-1 cDNA from cucumber mosaic virus strain O.</title>
        <authorList>
            <person name="Hayakawa T."/>
            <person name="Mizukami M."/>
            <person name="Nakamura I."/>
            <person name="Suzuki M."/>
        </authorList>
    </citation>
    <scope>NUCLEOTIDE SEQUENCE</scope>
</reference>
<evidence type="ECO:0000250" key="1"/>
<evidence type="ECO:0000255" key="2"/>
<evidence type="ECO:0000255" key="3">
    <source>
        <dbReference type="PROSITE-ProRule" id="PRU01079"/>
    </source>
</evidence>
<evidence type="ECO:0000256" key="4">
    <source>
        <dbReference type="SAM" id="MobiDB-lite"/>
    </source>
</evidence>
<evidence type="ECO:0000305" key="5"/>
<accession>P20122</accession>
<proteinExistence type="inferred from homology"/>